<proteinExistence type="evidence at protein level"/>
<name>OSC3_CITSI</name>
<protein>
    <recommendedName>
        <fullName evidence="4">Lupeol synthase OSC3</fullName>
        <ecNumber evidence="3">5.4.99.41</ecNumber>
    </recommendedName>
    <alternativeName>
        <fullName evidence="4">Oxidosqualene cyclase 3</fullName>
        <shortName evidence="4">CsOSC3</shortName>
    </alternativeName>
</protein>
<reference key="1">
    <citation type="submission" date="2014-04" db="EMBL/GenBank/DDBJ databases">
        <authorList>
            <consortium name="International Citrus Genome Consortium"/>
            <person name="Gmitter F."/>
            <person name="Chen C."/>
            <person name="Farmerie W."/>
            <person name="Harkins T."/>
            <person name="Desany B."/>
            <person name="Mohiuddin M."/>
            <person name="Kodira C."/>
            <person name="Borodovsky M."/>
            <person name="Lomsadze A."/>
            <person name="Burns P."/>
            <person name="Jenkins J."/>
            <person name="Prochnik S."/>
            <person name="Shu S."/>
            <person name="Chapman J."/>
            <person name="Pitluck S."/>
            <person name="Schmutz J."/>
            <person name="Rokhsar D."/>
        </authorList>
    </citation>
    <scope>NUCLEOTIDE SEQUENCE [LARGE SCALE GENOMIC DNA]</scope>
    <source>
        <strain>cv. Ridge Pineapple sweet orange</strain>
    </source>
</reference>
<reference key="2">
    <citation type="journal article" date="2019" name="Proc. Natl. Acad. Sci. U.S.A.">
        <title>Identification of key enzymes responsible for protolimonoid biosynthesis in plants: Opening the door to azadirachtin production.</title>
        <authorList>
            <person name="Hodgson H."/>
            <person name="De La Pena R."/>
            <person name="Stephenson M.J."/>
            <person name="Thimmappa R."/>
            <person name="Vincent J.L."/>
            <person name="Sattely E.S."/>
            <person name="Osbourn A."/>
        </authorList>
    </citation>
    <scope>FUNCTION</scope>
    <scope>CATALYTIC ACTIVITY</scope>
    <scope>PATHWAY</scope>
</reference>
<dbReference type="EC" id="5.4.99.41" evidence="3"/>
<dbReference type="EMBL" id="KK786358">
    <property type="protein sequence ID" value="KDO39700.1"/>
    <property type="status" value="ALT_SEQ"/>
    <property type="molecule type" value="Genomic_DNA"/>
</dbReference>
<dbReference type="SMR" id="A0A067DDU9"/>
<dbReference type="UniPathway" id="UPA00213"/>
<dbReference type="Proteomes" id="UP000027120">
    <property type="component" value="Unassembled WGS sequence"/>
</dbReference>
<dbReference type="GO" id="GO:0005811">
    <property type="term" value="C:lipid droplet"/>
    <property type="evidence" value="ECO:0007669"/>
    <property type="project" value="InterPro"/>
</dbReference>
<dbReference type="GO" id="GO:0042300">
    <property type="term" value="F:beta-amyrin synthase activity"/>
    <property type="evidence" value="ECO:0007669"/>
    <property type="project" value="UniProtKB-ARBA"/>
</dbReference>
<dbReference type="GO" id="GO:0016104">
    <property type="term" value="P:triterpenoid biosynthetic process"/>
    <property type="evidence" value="ECO:0007669"/>
    <property type="project" value="InterPro"/>
</dbReference>
<dbReference type="CDD" id="cd02892">
    <property type="entry name" value="SQCY_1"/>
    <property type="match status" value="1"/>
</dbReference>
<dbReference type="FunFam" id="1.50.10.20:FF:000011">
    <property type="entry name" value="Terpene cyclase/mutase family member"/>
    <property type="match status" value="1"/>
</dbReference>
<dbReference type="Gene3D" id="1.50.10.20">
    <property type="match status" value="2"/>
</dbReference>
<dbReference type="InterPro" id="IPR032696">
    <property type="entry name" value="SQ_cyclase_C"/>
</dbReference>
<dbReference type="InterPro" id="IPR032697">
    <property type="entry name" value="SQ_cyclase_N"/>
</dbReference>
<dbReference type="InterPro" id="IPR018333">
    <property type="entry name" value="Squalene_cyclase"/>
</dbReference>
<dbReference type="InterPro" id="IPR002365">
    <property type="entry name" value="Terpene_synthase_CS"/>
</dbReference>
<dbReference type="InterPro" id="IPR008930">
    <property type="entry name" value="Terpenoid_cyclase/PrenylTrfase"/>
</dbReference>
<dbReference type="NCBIfam" id="TIGR01787">
    <property type="entry name" value="squalene_cyclas"/>
    <property type="match status" value="1"/>
</dbReference>
<dbReference type="PANTHER" id="PTHR11764:SF58">
    <property type="entry name" value="BETA-AMYRIN SYNTHASE-RELATED"/>
    <property type="match status" value="1"/>
</dbReference>
<dbReference type="PANTHER" id="PTHR11764">
    <property type="entry name" value="TERPENE CYCLASE/MUTASE FAMILY MEMBER"/>
    <property type="match status" value="1"/>
</dbReference>
<dbReference type="Pfam" id="PF13243">
    <property type="entry name" value="SQHop_cyclase_C"/>
    <property type="match status" value="1"/>
</dbReference>
<dbReference type="Pfam" id="PF13249">
    <property type="entry name" value="SQHop_cyclase_N"/>
    <property type="match status" value="1"/>
</dbReference>
<dbReference type="SFLD" id="SFLDG01016">
    <property type="entry name" value="Prenyltransferase_Like_2"/>
    <property type="match status" value="1"/>
</dbReference>
<dbReference type="SUPFAM" id="SSF48239">
    <property type="entry name" value="Terpenoid cyclases/Protein prenyltransferases"/>
    <property type="match status" value="2"/>
</dbReference>
<dbReference type="PROSITE" id="PS01074">
    <property type="entry name" value="TERPENE_SYNTHASES"/>
    <property type="match status" value="1"/>
</dbReference>
<feature type="chain" id="PRO_0000461328" description="Lupeol synthase OSC3">
    <location>
        <begin position="1"/>
        <end position="733"/>
    </location>
</feature>
<feature type="repeat" description="PFTB 1" evidence="2">
    <location>
        <begin position="121"/>
        <end position="162"/>
    </location>
</feature>
<feature type="repeat" description="PFTB 2" evidence="2">
    <location>
        <begin position="426"/>
        <end position="468"/>
    </location>
</feature>
<feature type="repeat" description="PFTB 3" evidence="2">
    <location>
        <begin position="486"/>
        <end position="528"/>
    </location>
</feature>
<feature type="repeat" description="PFTB 4" evidence="2">
    <location>
        <begin position="563"/>
        <end position="603"/>
    </location>
</feature>
<feature type="repeat" description="PFTB 5" evidence="2">
    <location>
        <begin position="612"/>
        <end position="653"/>
    </location>
</feature>
<feature type="repeat" description="PFTB 6" evidence="2">
    <location>
        <begin position="674"/>
        <end position="715"/>
    </location>
</feature>
<feature type="active site" description="Proton donor" evidence="1">
    <location>
        <position position="457"/>
    </location>
</feature>
<accession>A0A067DDU9</accession>
<gene>
    <name evidence="4" type="primary">OSC3</name>
    <name evidence="6" type="ORF">CISIN_1g048587mg</name>
</gene>
<evidence type="ECO:0000250" key="1">
    <source>
        <dbReference type="UniProtKB" id="P48449"/>
    </source>
</evidence>
<evidence type="ECO:0000255" key="2"/>
<evidence type="ECO:0000269" key="3">
    <source>
    </source>
</evidence>
<evidence type="ECO:0000303" key="4">
    <source>
    </source>
</evidence>
<evidence type="ECO:0000305" key="5"/>
<evidence type="ECO:0000312" key="6">
    <source>
        <dbReference type="EMBL" id="KDO39700.1"/>
    </source>
</evidence>
<comment type="function">
    <text evidence="3">Oxidosqualene cyclase catalyzing the conversion of 2,3-oxidosqualene (2,3-epoxysqualene) to lupeol, a pentacyclic triterpenoid with anti-inflammatory properties.</text>
</comment>
<comment type="catalytic activity">
    <reaction evidence="3">
        <text>(S)-2,3-epoxysqualene = lupeol</text>
        <dbReference type="Rhea" id="RHEA:31383"/>
        <dbReference type="ChEBI" id="CHEBI:6570"/>
        <dbReference type="ChEBI" id="CHEBI:15441"/>
        <dbReference type="EC" id="5.4.99.41"/>
    </reaction>
    <physiologicalReaction direction="left-to-right" evidence="3">
        <dbReference type="Rhea" id="RHEA:31384"/>
    </physiologicalReaction>
</comment>
<comment type="pathway">
    <text evidence="3">Secondary metabolite biosynthesis; terpenoid biosynthesis.</text>
</comment>
<comment type="similarity">
    <text evidence="5">Belongs to the terpene cyclase/mutase family.</text>
</comment>
<comment type="sequence caution" evidence="5">
    <conflict type="erroneous gene model prediction">
        <sequence resource="EMBL-CDS" id="KDO39700"/>
    </conflict>
</comment>
<keyword id="KW-0413">Isomerase</keyword>
<keyword id="KW-1185">Reference proteome</keyword>
<keyword id="KW-0677">Repeat</keyword>
<organism>
    <name type="scientific">Citrus sinensis</name>
    <name type="common">Sweet orange</name>
    <name type="synonym">Citrus aurantium var. sinensis</name>
    <dbReference type="NCBI Taxonomy" id="2711"/>
    <lineage>
        <taxon>Eukaryota</taxon>
        <taxon>Viridiplantae</taxon>
        <taxon>Streptophyta</taxon>
        <taxon>Embryophyta</taxon>
        <taxon>Tracheophyta</taxon>
        <taxon>Spermatophyta</taxon>
        <taxon>Magnoliopsida</taxon>
        <taxon>eudicotyledons</taxon>
        <taxon>Gunneridae</taxon>
        <taxon>Pentapetalae</taxon>
        <taxon>rosids</taxon>
        <taxon>malvids</taxon>
        <taxon>Sapindales</taxon>
        <taxon>Rutaceae</taxon>
        <taxon>Aurantioideae</taxon>
        <taxon>Citrus</taxon>
    </lineage>
</organism>
<sequence>MWRLKIGDYGTKNDPYIFSTNNFAGRQIWEFDPDAGSVEELAEVEEARLNYLKNRFNVKNSSDLLWQIQILREKKFKQTIPQVKIGDRGEEITPEIATTALRRAVNIFSALQSSHGHWPADNSGPLFFNTPMNEDGGWGLHVEGHSTMFGTVFNYICMRLLGEGPDGGENSGCTRARKWILDRGGATGIPSWGKTWLSILGVYNWSGCNPMPPEFWKLPYFLPISPGKLLCYCRLTYMPMSYFYGKRFVGPITPLVLQLREEIYIQPYDEINWSKLRHLCAKEDLFFPHTTVQNLLWDALHNLVEPVLNRWPLNKLREKSLEAAMTHIHYEDEASRYMTIGCVEKPLNMLSCWAEDPNGDYFKKHLARIGEYFWMGEDGMRVQSFGSQTWDCAFAVQALLACNLTDEIGPILMKAHDFLKTSQVTDNPPGDFESMFRHTSKGGWTFSNKDHGWPVSDCTAEALLCCLYFSMLPPEIVGEKMEPERYYDAVNCIISMQSQTGGVPAWEPRRAPSWLESLNPIEFFDEVIIEHDKVECTASALKAMTLFKKLYPKHKAKDVENFIRNAAKFIEDTQKLDGSWYGGWGICFTYGTWFAISGLVTAKKTYSNCLAIRKATDFLLKIQCEDGGWGESYRSCPNKKYIHLEGNRSNLVQTSWAMMGLIHAGQMERDPTPLHRASKLLINSQLEDGDFPQQELTGAFMGNCMLHYPTYRNIFPMWALAEYRSKFQSSKIF</sequence>